<accession>Q8ZVM0</accession>
<keyword id="KW-0067">ATP-binding</keyword>
<keyword id="KW-0238">DNA-binding</keyword>
<keyword id="KW-0413">Isomerase</keyword>
<keyword id="KW-0547">Nucleotide-binding</keyword>
<keyword id="KW-1185">Reference proteome</keyword>
<keyword id="KW-0799">Topoisomerase</keyword>
<sequence length="527" mass="59870">MYAYEALPVAEWFRRNRELAGFHNPTRALYQTIRELTENSLDATETYGILPTIYLRVNIEDEQKGWVSVYAEDNGIGIPGNEIPNVFGRVFYSSKYKIKQHRGVFGLGLKMVVLYSQSTTNKPVLVRSATLKSDKIYEYQIMIDTNSNSPIILDRREYPNRYKWHGTAVKVYLEGNWLAAKKRIEDYLKRTAIIAPYAEIVFKGPDLELWLKRRTTKLPPAPKEGLPHPKSVDVDTLKQMIQESRGLTLLEFLMENFDAVGEGTAKAFLEWAGFNPNAKVTALTPEELVKLVDKMKQYEGWRRPRSDWLSPAGAELLEIGAKAILGAEAVFAITRKPESYGGHPFIVEAAVAWGGQIPPADKPLLLRYANKIPLLYDEGADVARKVVDEFNWQNYKVKFPAPLAVIIHVCSTKIPYASAGKEAIAEVPEIEKEMKLALRDAAKKLRLYLSRKEKEMEMLNKYISLAKYVEEIAYNLSMITRIEKESLAKNLHTLIERKIGLTIEELVKHTLSMSSTSQEEVVEATPQ</sequence>
<name>TOP6B_PYRAE</name>
<protein>
    <recommendedName>
        <fullName evidence="1">Type 2 DNA topoisomerase 6 subunit B</fullName>
        <ecNumber evidence="1">5.6.2.2</ecNumber>
    </recommendedName>
    <alternativeName>
        <fullName evidence="1">Type II DNA topoisomerase VI subunit B</fullName>
        <shortName evidence="1">TopoVI-B</shortName>
    </alternativeName>
</protein>
<organism>
    <name type="scientific">Pyrobaculum aerophilum (strain ATCC 51768 / DSM 7523 / JCM 9630 / CIP 104966 / NBRC 100827 / IM2)</name>
    <dbReference type="NCBI Taxonomy" id="178306"/>
    <lineage>
        <taxon>Archaea</taxon>
        <taxon>Thermoproteota</taxon>
        <taxon>Thermoprotei</taxon>
        <taxon>Thermoproteales</taxon>
        <taxon>Thermoproteaceae</taxon>
        <taxon>Pyrobaculum</taxon>
    </lineage>
</organism>
<proteinExistence type="inferred from homology"/>
<evidence type="ECO:0000255" key="1">
    <source>
        <dbReference type="HAMAP-Rule" id="MF_00322"/>
    </source>
</evidence>
<reference key="1">
    <citation type="journal article" date="2002" name="Proc. Natl. Acad. Sci. U.S.A.">
        <title>Genome sequence of the hyperthermophilic crenarchaeon Pyrobaculum aerophilum.</title>
        <authorList>
            <person name="Fitz-Gibbon S.T."/>
            <person name="Ladner H."/>
            <person name="Kim U.-J."/>
            <person name="Stetter K.O."/>
            <person name="Simon M.I."/>
            <person name="Miller J.H."/>
        </authorList>
    </citation>
    <scope>NUCLEOTIDE SEQUENCE [LARGE SCALE GENOMIC DNA]</scope>
    <source>
        <strain>ATCC 51768 / DSM 7523 / JCM 9630 / CIP 104966 / NBRC 100827 / IM2</strain>
    </source>
</reference>
<comment type="function">
    <text evidence="1">Relaxes both positive and negative superturns and exhibits a strong decatenase activity.</text>
</comment>
<comment type="catalytic activity">
    <reaction evidence="1">
        <text>ATP-dependent breakage, passage and rejoining of double-stranded DNA.</text>
        <dbReference type="EC" id="5.6.2.2"/>
    </reaction>
</comment>
<comment type="subunit">
    <text evidence="1">Homodimer. Heterotetramer of two Top6A and two Top6B chains.</text>
</comment>
<comment type="similarity">
    <text evidence="1">Belongs to the TOP6B family.</text>
</comment>
<dbReference type="EC" id="5.6.2.2" evidence="1"/>
<dbReference type="EMBL" id="AE009441">
    <property type="protein sequence ID" value="AAL64036.1"/>
    <property type="molecule type" value="Genomic_DNA"/>
</dbReference>
<dbReference type="RefSeq" id="WP_011008504.1">
    <property type="nucleotide sequence ID" value="NC_003364.1"/>
</dbReference>
<dbReference type="SMR" id="Q8ZVM0"/>
<dbReference type="FunCoup" id="Q8ZVM0">
    <property type="interactions" value="21"/>
</dbReference>
<dbReference type="STRING" id="178306.PAE2217"/>
<dbReference type="EnsemblBacteria" id="AAL64036">
    <property type="protein sequence ID" value="AAL64036"/>
    <property type="gene ID" value="PAE2217"/>
</dbReference>
<dbReference type="GeneID" id="1464370"/>
<dbReference type="KEGG" id="pai:PAE2217"/>
<dbReference type="PATRIC" id="fig|178306.9.peg.1648"/>
<dbReference type="eggNOG" id="arCOG01165">
    <property type="taxonomic scope" value="Archaea"/>
</dbReference>
<dbReference type="HOGENOM" id="CLU_006403_0_0_2"/>
<dbReference type="InParanoid" id="Q8ZVM0"/>
<dbReference type="Proteomes" id="UP000002439">
    <property type="component" value="Chromosome"/>
</dbReference>
<dbReference type="GO" id="GO:0005829">
    <property type="term" value="C:cytosol"/>
    <property type="evidence" value="ECO:0000318"/>
    <property type="project" value="GO_Central"/>
</dbReference>
<dbReference type="GO" id="GO:0015935">
    <property type="term" value="C:small ribosomal subunit"/>
    <property type="evidence" value="ECO:0000318"/>
    <property type="project" value="GO_Central"/>
</dbReference>
<dbReference type="GO" id="GO:0005524">
    <property type="term" value="F:ATP binding"/>
    <property type="evidence" value="ECO:0007669"/>
    <property type="project" value="UniProtKB-UniRule"/>
</dbReference>
<dbReference type="GO" id="GO:0003677">
    <property type="term" value="F:DNA binding"/>
    <property type="evidence" value="ECO:0007669"/>
    <property type="project" value="UniProtKB-UniRule"/>
</dbReference>
<dbReference type="GO" id="GO:0003918">
    <property type="term" value="F:DNA topoisomerase type II (double strand cut, ATP-hydrolyzing) activity"/>
    <property type="evidence" value="ECO:0007669"/>
    <property type="project" value="UniProtKB-UniRule"/>
</dbReference>
<dbReference type="GO" id="GO:0006265">
    <property type="term" value="P:DNA topological change"/>
    <property type="evidence" value="ECO:0007669"/>
    <property type="project" value="UniProtKB-UniRule"/>
</dbReference>
<dbReference type="CDD" id="cd16933">
    <property type="entry name" value="HATPase_TopVIB-like"/>
    <property type="match status" value="1"/>
</dbReference>
<dbReference type="CDD" id="cd00823">
    <property type="entry name" value="TopoIIB_Trans"/>
    <property type="match status" value="1"/>
</dbReference>
<dbReference type="FunFam" id="1.10.8.50:FF:000014">
    <property type="entry name" value="Type 2 DNA topoisomerase 6 subunit B"/>
    <property type="match status" value="1"/>
</dbReference>
<dbReference type="FunFam" id="3.30.565.10:FF:000062">
    <property type="entry name" value="Type 2 DNA topoisomerase 6 subunit B"/>
    <property type="match status" value="1"/>
</dbReference>
<dbReference type="Gene3D" id="1.10.8.50">
    <property type="match status" value="1"/>
</dbReference>
<dbReference type="Gene3D" id="3.30.230.10">
    <property type="match status" value="1"/>
</dbReference>
<dbReference type="Gene3D" id="3.30.565.10">
    <property type="entry name" value="Histidine kinase-like ATPase, C-terminal domain"/>
    <property type="match status" value="1"/>
</dbReference>
<dbReference type="HAMAP" id="MF_00322">
    <property type="entry name" value="Top6B"/>
    <property type="match status" value="1"/>
</dbReference>
<dbReference type="InterPro" id="IPR036890">
    <property type="entry name" value="HATPase_C_sf"/>
</dbReference>
<dbReference type="InterPro" id="IPR020568">
    <property type="entry name" value="Ribosomal_Su5_D2-typ_SF"/>
</dbReference>
<dbReference type="InterPro" id="IPR010979">
    <property type="entry name" value="Ribosomal_uS13-like_H2TH"/>
</dbReference>
<dbReference type="InterPro" id="IPR014721">
    <property type="entry name" value="Ribsml_uS5_D2-typ_fold_subgr"/>
</dbReference>
<dbReference type="InterPro" id="IPR005734">
    <property type="entry name" value="TopoVI_B"/>
</dbReference>
<dbReference type="InterPro" id="IPR015320">
    <property type="entry name" value="TopoVI_B_transducer"/>
</dbReference>
<dbReference type="NCBIfam" id="NF003218">
    <property type="entry name" value="PRK04184.1"/>
    <property type="match status" value="1"/>
</dbReference>
<dbReference type="NCBIfam" id="TIGR01052">
    <property type="entry name" value="top6b"/>
    <property type="match status" value="1"/>
</dbReference>
<dbReference type="PANTHER" id="PTHR48444">
    <property type="entry name" value="DNA TOPOISOMERASE 6 SUBUNIT B"/>
    <property type="match status" value="1"/>
</dbReference>
<dbReference type="PANTHER" id="PTHR48444:SF1">
    <property type="entry name" value="DNA TOPOISOMERASE 6 SUBUNIT B"/>
    <property type="match status" value="1"/>
</dbReference>
<dbReference type="Pfam" id="PF02518">
    <property type="entry name" value="HATPase_c"/>
    <property type="match status" value="1"/>
</dbReference>
<dbReference type="Pfam" id="PF09239">
    <property type="entry name" value="Topo-VIb_trans"/>
    <property type="match status" value="1"/>
</dbReference>
<dbReference type="PIRSF" id="PIRSF006553">
    <property type="entry name" value="TopoVI_B"/>
    <property type="match status" value="1"/>
</dbReference>
<dbReference type="SUPFAM" id="SSF55874">
    <property type="entry name" value="ATPase domain of HSP90 chaperone/DNA topoisomerase II/histidine kinase"/>
    <property type="match status" value="1"/>
</dbReference>
<dbReference type="SUPFAM" id="SSF54211">
    <property type="entry name" value="Ribosomal protein S5 domain 2-like"/>
    <property type="match status" value="1"/>
</dbReference>
<dbReference type="SUPFAM" id="SSF46946">
    <property type="entry name" value="S13-like H2TH domain"/>
    <property type="match status" value="1"/>
</dbReference>
<feature type="chain" id="PRO_0000145466" description="Type 2 DNA topoisomerase 6 subunit B">
    <location>
        <begin position="1"/>
        <end position="527"/>
    </location>
</feature>
<feature type="binding site" evidence="1">
    <location>
        <position position="39"/>
    </location>
    <ligand>
        <name>ATP</name>
        <dbReference type="ChEBI" id="CHEBI:30616"/>
    </ligand>
</feature>
<feature type="binding site" evidence="1">
    <location>
        <position position="73"/>
    </location>
    <ligand>
        <name>ATP</name>
        <dbReference type="ChEBI" id="CHEBI:30616"/>
    </ligand>
</feature>
<feature type="binding site" evidence="1">
    <location>
        <begin position="94"/>
        <end position="95"/>
    </location>
    <ligand>
        <name>ATP</name>
        <dbReference type="ChEBI" id="CHEBI:30616"/>
    </ligand>
</feature>
<feature type="binding site" evidence="1">
    <location>
        <begin position="103"/>
        <end position="110"/>
    </location>
    <ligand>
        <name>ATP</name>
        <dbReference type="ChEBI" id="CHEBI:30616"/>
    </ligand>
</feature>
<feature type="binding site" evidence="1">
    <location>
        <position position="421"/>
    </location>
    <ligand>
        <name>ATP</name>
        <dbReference type="ChEBI" id="CHEBI:30616"/>
    </ligand>
</feature>
<gene>
    <name evidence="1" type="primary">top6B</name>
    <name type="ordered locus">PAE2217</name>
</gene>